<comment type="function">
    <text evidence="2 4 6 7 8">Heme-containing cytochrome P450 involved in the biosynthesis of xanthophylls. Specific for epsilon- and beta-ring hydroxylation of alpha-carotene. Has only a low activity toward the beta-rings of beta-carotene. The preferred substrate in planta is not alpha-carotene but the epsilon-ring of zeinoxanthin (PubMed:12782726, PubMed:16890225, PubMed:19147649, PubMed:19939422). Possesses a major beta-carotene hydroxylase activity in planta when depleted in its preferred substrate alpha-carotene (PubMed:22513258).</text>
</comment>
<comment type="catalytic activity">
    <reaction>
        <text>alpha-carotene + reduced [NADPH--hemoprotein reductase] + O2 = alpha-cryptoxanthin + oxidized [NADPH--hemoprotein reductase] + H2O + H(+)</text>
        <dbReference type="Rhea" id="RHEA:30399"/>
        <dbReference type="Rhea" id="RHEA-COMP:11964"/>
        <dbReference type="Rhea" id="RHEA-COMP:11965"/>
        <dbReference type="ChEBI" id="CHEBI:10223"/>
        <dbReference type="ChEBI" id="CHEBI:15377"/>
        <dbReference type="ChEBI" id="CHEBI:15378"/>
        <dbReference type="ChEBI" id="CHEBI:15379"/>
        <dbReference type="ChEBI" id="CHEBI:28425"/>
        <dbReference type="ChEBI" id="CHEBI:57618"/>
        <dbReference type="ChEBI" id="CHEBI:58210"/>
        <dbReference type="EC" id="1.14.14.158"/>
    </reaction>
</comment>
<comment type="catalytic activity">
    <reaction>
        <text>zeinoxanthin + reduced [NADPH--hemoprotein reductase] + O2 = lutein + oxidized [NADPH--hemoprotein reductase] + H2O + H(+)</text>
        <dbReference type="Rhea" id="RHEA:57352"/>
        <dbReference type="Rhea" id="RHEA-COMP:11964"/>
        <dbReference type="Rhea" id="RHEA-COMP:11965"/>
        <dbReference type="ChEBI" id="CHEBI:15377"/>
        <dbReference type="ChEBI" id="CHEBI:15378"/>
        <dbReference type="ChEBI" id="CHEBI:15379"/>
        <dbReference type="ChEBI" id="CHEBI:28838"/>
        <dbReference type="ChEBI" id="CHEBI:57618"/>
        <dbReference type="ChEBI" id="CHEBI:58210"/>
        <dbReference type="ChEBI" id="CHEBI:65244"/>
        <dbReference type="EC" id="1.14.14.158"/>
    </reaction>
</comment>
<comment type="cofactor">
    <cofactor evidence="9">
        <name>heme</name>
        <dbReference type="ChEBI" id="CHEBI:30413"/>
    </cofactor>
</comment>
<comment type="subcellular location">
    <subcellularLocation>
        <location evidence="1">Plastid</location>
        <location evidence="1">Chloroplast</location>
    </subcellularLocation>
</comment>
<comment type="disruption phenotype">
    <text evidence="2 3 4 5">No visible phenotype, but lacks lutein and accumulates high levels of zeinoxanthin and beta-xanthophylls. Triple mutant cyp97c1, bch1 and bch2 is paler and smaller than wild-type.</text>
</comment>
<comment type="similarity">
    <text evidence="10">Belongs to the cytochrome P450 family.</text>
</comment>
<comment type="sequence caution" evidence="10">
    <conflict type="erroneous initiation">
        <sequence resource="EMBL-CDS" id="AAM13903"/>
    </conflict>
    <text>Extended N-terminus.</text>
</comment>
<comment type="sequence caution" evidence="10">
    <conflict type="erroneous gene model prediction">
        <sequence resource="EMBL-CDS" id="CAB64216"/>
    </conflict>
</comment>
<dbReference type="EC" id="1.14.14.158"/>
<dbReference type="EMBL" id="AY424805">
    <property type="protein sequence ID" value="AAR83120.1"/>
    <property type="molecule type" value="mRNA"/>
</dbReference>
<dbReference type="EMBL" id="AL132958">
    <property type="protein sequence ID" value="CAB64216.1"/>
    <property type="status" value="ALT_SEQ"/>
    <property type="molecule type" value="Genomic_DNA"/>
</dbReference>
<dbReference type="EMBL" id="CP002686">
    <property type="protein sequence ID" value="AEE79040.1"/>
    <property type="molecule type" value="Genomic_DNA"/>
</dbReference>
<dbReference type="EMBL" id="AY091083">
    <property type="protein sequence ID" value="AAM13903.1"/>
    <property type="status" value="ALT_INIT"/>
    <property type="molecule type" value="mRNA"/>
</dbReference>
<dbReference type="EMBL" id="AK220829">
    <property type="protein sequence ID" value="BAD94136.1"/>
    <property type="molecule type" value="mRNA"/>
</dbReference>
<dbReference type="PIR" id="T46159">
    <property type="entry name" value="T46159"/>
</dbReference>
<dbReference type="RefSeq" id="NP_190881.2">
    <property type="nucleotide sequence ID" value="NM_115173.3"/>
</dbReference>
<dbReference type="PDB" id="6L8H">
    <property type="method" value="X-ray"/>
    <property type="resolution" value="2.00 A"/>
    <property type="chains" value="A/B/C/D=70-539"/>
</dbReference>
<dbReference type="PDBsum" id="6L8H"/>
<dbReference type="SMR" id="Q6TBX7"/>
<dbReference type="BioGRID" id="9796">
    <property type="interactions" value="11"/>
</dbReference>
<dbReference type="FunCoup" id="Q6TBX7">
    <property type="interactions" value="1006"/>
</dbReference>
<dbReference type="IntAct" id="Q6TBX7">
    <property type="interactions" value="11"/>
</dbReference>
<dbReference type="STRING" id="3702.Q6TBX7"/>
<dbReference type="iPTMnet" id="Q6TBX7"/>
<dbReference type="PaxDb" id="3702-AT3G53130.1"/>
<dbReference type="ProteomicsDB" id="238579"/>
<dbReference type="EnsemblPlants" id="AT3G53130.1">
    <property type="protein sequence ID" value="AT3G53130.1"/>
    <property type="gene ID" value="AT3G53130"/>
</dbReference>
<dbReference type="GeneID" id="824479"/>
<dbReference type="Gramene" id="AT3G53130.1">
    <property type="protein sequence ID" value="AT3G53130.1"/>
    <property type="gene ID" value="AT3G53130"/>
</dbReference>
<dbReference type="KEGG" id="ath:AT3G53130"/>
<dbReference type="Araport" id="AT3G53130"/>
<dbReference type="TAIR" id="AT3G53130">
    <property type="gene designation" value="LUT1"/>
</dbReference>
<dbReference type="eggNOG" id="KOG0157">
    <property type="taxonomic scope" value="Eukaryota"/>
</dbReference>
<dbReference type="HOGENOM" id="CLU_001570_5_5_1"/>
<dbReference type="InParanoid" id="Q6TBX7"/>
<dbReference type="OMA" id="WPHPETF"/>
<dbReference type="BioCyc" id="ARA:AT3G53130-MONOMER"/>
<dbReference type="BioCyc" id="MetaCyc:AT3G53130-MONOMER"/>
<dbReference type="BRENDA" id="1.14.14.158">
    <property type="organism ID" value="399"/>
</dbReference>
<dbReference type="PRO" id="PR:Q6TBX7"/>
<dbReference type="Proteomes" id="UP000006548">
    <property type="component" value="Chromosome 3"/>
</dbReference>
<dbReference type="ExpressionAtlas" id="Q6TBX7">
    <property type="expression patterns" value="baseline and differential"/>
</dbReference>
<dbReference type="GO" id="GO:0009507">
    <property type="term" value="C:chloroplast"/>
    <property type="evidence" value="ECO:0007005"/>
    <property type="project" value="TAIR"/>
</dbReference>
<dbReference type="GO" id="GO:0009941">
    <property type="term" value="C:chloroplast envelope"/>
    <property type="evidence" value="ECO:0007005"/>
    <property type="project" value="TAIR"/>
</dbReference>
<dbReference type="GO" id="GO:0072374">
    <property type="term" value="F:carotene epsilon hydroxylase activity"/>
    <property type="evidence" value="ECO:0007669"/>
    <property type="project" value="UniProtKB-EC"/>
</dbReference>
<dbReference type="GO" id="GO:0020037">
    <property type="term" value="F:heme binding"/>
    <property type="evidence" value="ECO:0000314"/>
    <property type="project" value="UniProtKB"/>
</dbReference>
<dbReference type="GO" id="GO:0005506">
    <property type="term" value="F:iron ion binding"/>
    <property type="evidence" value="ECO:0007669"/>
    <property type="project" value="InterPro"/>
</dbReference>
<dbReference type="GO" id="GO:0016117">
    <property type="term" value="P:carotenoid biosynthetic process"/>
    <property type="evidence" value="ECO:0000315"/>
    <property type="project" value="TAIR"/>
</dbReference>
<dbReference type="CDD" id="cd11046">
    <property type="entry name" value="CYP97"/>
    <property type="match status" value="1"/>
</dbReference>
<dbReference type="FunFam" id="1.10.630.10:FF:000080">
    <property type="entry name" value="Carotene epsilon-monooxygenase, chloroplastic"/>
    <property type="match status" value="1"/>
</dbReference>
<dbReference type="Gene3D" id="1.10.630.10">
    <property type="entry name" value="Cytochrome P450"/>
    <property type="match status" value="1"/>
</dbReference>
<dbReference type="InterPro" id="IPR001128">
    <property type="entry name" value="Cyt_P450"/>
</dbReference>
<dbReference type="InterPro" id="IPR017972">
    <property type="entry name" value="Cyt_P450_CS"/>
</dbReference>
<dbReference type="InterPro" id="IPR002401">
    <property type="entry name" value="Cyt_P450_E_grp-I"/>
</dbReference>
<dbReference type="InterPro" id="IPR036396">
    <property type="entry name" value="Cyt_P450_sf"/>
</dbReference>
<dbReference type="InterPro" id="IPR050196">
    <property type="entry name" value="Cytochrome_P450_Monoox"/>
</dbReference>
<dbReference type="PANTHER" id="PTHR24291:SF134">
    <property type="entry name" value="CAROTENE EPSILON-MONOOXYGENASE, CHLOROPLASTIC"/>
    <property type="match status" value="1"/>
</dbReference>
<dbReference type="PANTHER" id="PTHR24291">
    <property type="entry name" value="CYTOCHROME P450 FAMILY 4"/>
    <property type="match status" value="1"/>
</dbReference>
<dbReference type="Pfam" id="PF00067">
    <property type="entry name" value="p450"/>
    <property type="match status" value="1"/>
</dbReference>
<dbReference type="PRINTS" id="PR00463">
    <property type="entry name" value="EP450I"/>
</dbReference>
<dbReference type="PRINTS" id="PR00385">
    <property type="entry name" value="P450"/>
</dbReference>
<dbReference type="SUPFAM" id="SSF48264">
    <property type="entry name" value="Cytochrome P450"/>
    <property type="match status" value="1"/>
</dbReference>
<dbReference type="PROSITE" id="PS00086">
    <property type="entry name" value="CYTOCHROME_P450"/>
    <property type="match status" value="1"/>
</dbReference>
<protein>
    <recommendedName>
        <fullName>Carotene epsilon-monooxygenase, chloroplastic</fullName>
        <ecNumber>1.14.14.158</ecNumber>
    </recommendedName>
    <alternativeName>
        <fullName>Cytochrome P450 97C1</fullName>
    </alternativeName>
    <alternativeName>
        <fullName>Protein LUTEIN DEFICIENT 1</fullName>
    </alternativeName>
</protein>
<gene>
    <name type="primary">CYP97C1</name>
    <name type="synonym">LUT1</name>
    <name type="ordered locus">At3g53130</name>
    <name type="ORF">T4D2.60</name>
</gene>
<sequence>MESSLFSPSSSSYSSLFTAKPTRLLSPKPKFTFSIRSSIEKPKPKLETNSSKSQSWVSPDWLTTLTRTLSSGKNDESGIPIANAKLDDVADLLGGALFLPLYKWMNEYGPIYRLAAGPRNFVIVSDPAIAKHVLRNYPKYAKGLVAEVSEFLFGSGFAIAEGPLWTARRRAVVPSLHRRYLSVIVERVFCKCAERLVEKLQPYAEDGSAVNMEAKFSQMTLDVIGLSLFNYNFDSLTTDSPVIEAVYTALKEAELRSTDLLPYWKIDALCKIVPRQVKAEKAVTLIRETVEDLIAKCKEIVEREGERINDEEYVNDADPSILRFLLASREEVSSVQLRDDLLSMLVAGHETTGSVLTWTLYLLSKNSSALRKAQEEVDRVLEGRNPAFEDIKELKYITRCINESMRLYPHPPVLIRRAQVPDILPGNYKVNTGQDIMISVYNIHRSSEVWEKAEEFLPERFDIDGAIPNETNTDFKFIPFSGGPRKCVGDQFALMEAIVALAVFLQRLNVELVPDQTISMTTGATIHTTNGLYMKVSQR</sequence>
<name>LUT1_ARATH</name>
<proteinExistence type="evidence at protein level"/>
<organism>
    <name type="scientific">Arabidopsis thaliana</name>
    <name type="common">Mouse-ear cress</name>
    <dbReference type="NCBI Taxonomy" id="3702"/>
    <lineage>
        <taxon>Eukaryota</taxon>
        <taxon>Viridiplantae</taxon>
        <taxon>Streptophyta</taxon>
        <taxon>Embryophyta</taxon>
        <taxon>Tracheophyta</taxon>
        <taxon>Spermatophyta</taxon>
        <taxon>Magnoliopsida</taxon>
        <taxon>eudicotyledons</taxon>
        <taxon>Gunneridae</taxon>
        <taxon>Pentapetalae</taxon>
        <taxon>rosids</taxon>
        <taxon>malvids</taxon>
        <taxon>Brassicales</taxon>
        <taxon>Brassicaceae</taxon>
        <taxon>Camelineae</taxon>
        <taxon>Arabidopsis</taxon>
    </lineage>
</organism>
<keyword id="KW-0002">3D-structure</keyword>
<keyword id="KW-0125">Carotenoid biosynthesis</keyword>
<keyword id="KW-0150">Chloroplast</keyword>
<keyword id="KW-0349">Heme</keyword>
<keyword id="KW-0408">Iron</keyword>
<keyword id="KW-0479">Metal-binding</keyword>
<keyword id="KW-0503">Monooxygenase</keyword>
<keyword id="KW-0560">Oxidoreductase</keyword>
<keyword id="KW-0934">Plastid</keyword>
<keyword id="KW-1185">Reference proteome</keyword>
<keyword id="KW-0809">Transit peptide</keyword>
<reference key="1">
    <citation type="journal article" date="2004" name="Proc. Natl. Acad. Sci. U.S.A.">
        <title>The Arabidopsis LUT1 locus encodes a member of the cytochrome p450 family that is required for carotenoid epsilon-ring hydroxylation activity.</title>
        <authorList>
            <person name="Tian L."/>
            <person name="Musetti V."/>
            <person name="Kim J."/>
            <person name="Magallanes-Lundback M."/>
            <person name="DellaPenna D."/>
        </authorList>
    </citation>
    <scope>NUCLEOTIDE SEQUENCE [MRNA]</scope>
    <scope>DISRUPTION PHENOTYPE</scope>
</reference>
<reference key="2">
    <citation type="journal article" date="2000" name="Nature">
        <title>Sequence and analysis of chromosome 3 of the plant Arabidopsis thaliana.</title>
        <authorList>
            <person name="Salanoubat M."/>
            <person name="Lemcke K."/>
            <person name="Rieger M."/>
            <person name="Ansorge W."/>
            <person name="Unseld M."/>
            <person name="Fartmann B."/>
            <person name="Valle G."/>
            <person name="Bloecker H."/>
            <person name="Perez-Alonso M."/>
            <person name="Obermaier B."/>
            <person name="Delseny M."/>
            <person name="Boutry M."/>
            <person name="Grivell L.A."/>
            <person name="Mache R."/>
            <person name="Puigdomenech P."/>
            <person name="De Simone V."/>
            <person name="Choisne N."/>
            <person name="Artiguenave F."/>
            <person name="Robert C."/>
            <person name="Brottier P."/>
            <person name="Wincker P."/>
            <person name="Cattolico L."/>
            <person name="Weissenbach J."/>
            <person name="Saurin W."/>
            <person name="Quetier F."/>
            <person name="Schaefer M."/>
            <person name="Mueller-Auer S."/>
            <person name="Gabel C."/>
            <person name="Fuchs M."/>
            <person name="Benes V."/>
            <person name="Wurmbach E."/>
            <person name="Drzonek H."/>
            <person name="Erfle H."/>
            <person name="Jordan N."/>
            <person name="Bangert S."/>
            <person name="Wiedelmann R."/>
            <person name="Kranz H."/>
            <person name="Voss H."/>
            <person name="Holland R."/>
            <person name="Brandt P."/>
            <person name="Nyakatura G."/>
            <person name="Vezzi A."/>
            <person name="D'Angelo M."/>
            <person name="Pallavicini A."/>
            <person name="Toppo S."/>
            <person name="Simionati B."/>
            <person name="Conrad A."/>
            <person name="Hornischer K."/>
            <person name="Kauer G."/>
            <person name="Loehnert T.-H."/>
            <person name="Nordsiek G."/>
            <person name="Reichelt J."/>
            <person name="Scharfe M."/>
            <person name="Schoen O."/>
            <person name="Bargues M."/>
            <person name="Terol J."/>
            <person name="Climent J."/>
            <person name="Navarro P."/>
            <person name="Collado C."/>
            <person name="Perez-Perez A."/>
            <person name="Ottenwaelder B."/>
            <person name="Duchemin D."/>
            <person name="Cooke R."/>
            <person name="Laudie M."/>
            <person name="Berger-Llauro C."/>
            <person name="Purnelle B."/>
            <person name="Masuy D."/>
            <person name="de Haan M."/>
            <person name="Maarse A.C."/>
            <person name="Alcaraz J.-P."/>
            <person name="Cottet A."/>
            <person name="Casacuberta E."/>
            <person name="Monfort A."/>
            <person name="Argiriou A."/>
            <person name="Flores M."/>
            <person name="Liguori R."/>
            <person name="Vitale D."/>
            <person name="Mannhaupt G."/>
            <person name="Haase D."/>
            <person name="Schoof H."/>
            <person name="Rudd S."/>
            <person name="Zaccaria P."/>
            <person name="Mewes H.-W."/>
            <person name="Mayer K.F.X."/>
            <person name="Kaul S."/>
            <person name="Town C.D."/>
            <person name="Koo H.L."/>
            <person name="Tallon L.J."/>
            <person name="Jenkins J."/>
            <person name="Rooney T."/>
            <person name="Rizzo M."/>
            <person name="Walts A."/>
            <person name="Utterback T."/>
            <person name="Fujii C.Y."/>
            <person name="Shea T.P."/>
            <person name="Creasy T.H."/>
            <person name="Haas B."/>
            <person name="Maiti R."/>
            <person name="Wu D."/>
            <person name="Peterson J."/>
            <person name="Van Aken S."/>
            <person name="Pai G."/>
            <person name="Militscher J."/>
            <person name="Sellers P."/>
            <person name="Gill J.E."/>
            <person name="Feldblyum T.V."/>
            <person name="Preuss D."/>
            <person name="Lin X."/>
            <person name="Nierman W.C."/>
            <person name="Salzberg S.L."/>
            <person name="White O."/>
            <person name="Venter J.C."/>
            <person name="Fraser C.M."/>
            <person name="Kaneko T."/>
            <person name="Nakamura Y."/>
            <person name="Sato S."/>
            <person name="Kato T."/>
            <person name="Asamizu E."/>
            <person name="Sasamoto S."/>
            <person name="Kimura T."/>
            <person name="Idesawa K."/>
            <person name="Kawashima K."/>
            <person name="Kishida Y."/>
            <person name="Kiyokawa C."/>
            <person name="Kohara M."/>
            <person name="Matsumoto M."/>
            <person name="Matsuno A."/>
            <person name="Muraki A."/>
            <person name="Nakayama S."/>
            <person name="Nakazaki N."/>
            <person name="Shinpo S."/>
            <person name="Takeuchi C."/>
            <person name="Wada T."/>
            <person name="Watanabe A."/>
            <person name="Yamada M."/>
            <person name="Yasuda M."/>
            <person name="Tabata S."/>
        </authorList>
    </citation>
    <scope>NUCLEOTIDE SEQUENCE [LARGE SCALE GENOMIC DNA]</scope>
    <source>
        <strain>cv. Columbia</strain>
    </source>
</reference>
<reference key="3">
    <citation type="journal article" date="2017" name="Plant J.">
        <title>Araport11: a complete reannotation of the Arabidopsis thaliana reference genome.</title>
        <authorList>
            <person name="Cheng C.Y."/>
            <person name="Krishnakumar V."/>
            <person name="Chan A.P."/>
            <person name="Thibaud-Nissen F."/>
            <person name="Schobel S."/>
            <person name="Town C.D."/>
        </authorList>
    </citation>
    <scope>GENOME REANNOTATION</scope>
    <source>
        <strain>cv. Columbia</strain>
    </source>
</reference>
<reference key="4">
    <citation type="journal article" date="2003" name="Science">
        <title>Empirical analysis of transcriptional activity in the Arabidopsis genome.</title>
        <authorList>
            <person name="Yamada K."/>
            <person name="Lim J."/>
            <person name="Dale J.M."/>
            <person name="Chen H."/>
            <person name="Shinn P."/>
            <person name="Palm C.J."/>
            <person name="Southwick A.M."/>
            <person name="Wu H.C."/>
            <person name="Kim C.J."/>
            <person name="Nguyen M."/>
            <person name="Pham P.K."/>
            <person name="Cheuk R.F."/>
            <person name="Karlin-Newmann G."/>
            <person name="Liu S.X."/>
            <person name="Lam B."/>
            <person name="Sakano H."/>
            <person name="Wu T."/>
            <person name="Yu G."/>
            <person name="Miranda M."/>
            <person name="Quach H.L."/>
            <person name="Tripp M."/>
            <person name="Chang C.H."/>
            <person name="Lee J.M."/>
            <person name="Toriumi M.J."/>
            <person name="Chan M.M."/>
            <person name="Tang C.C."/>
            <person name="Onodera C.S."/>
            <person name="Deng J.M."/>
            <person name="Akiyama K."/>
            <person name="Ansari Y."/>
            <person name="Arakawa T."/>
            <person name="Banh J."/>
            <person name="Banno F."/>
            <person name="Bowser L."/>
            <person name="Brooks S.Y."/>
            <person name="Carninci P."/>
            <person name="Chao Q."/>
            <person name="Choy N."/>
            <person name="Enju A."/>
            <person name="Goldsmith A.D."/>
            <person name="Gurjal M."/>
            <person name="Hansen N.F."/>
            <person name="Hayashizaki Y."/>
            <person name="Johnson-Hopson C."/>
            <person name="Hsuan V.W."/>
            <person name="Iida K."/>
            <person name="Karnes M."/>
            <person name="Khan S."/>
            <person name="Koesema E."/>
            <person name="Ishida J."/>
            <person name="Jiang P.X."/>
            <person name="Jones T."/>
            <person name="Kawai J."/>
            <person name="Kamiya A."/>
            <person name="Meyers C."/>
            <person name="Nakajima M."/>
            <person name="Narusaka M."/>
            <person name="Seki M."/>
            <person name="Sakurai T."/>
            <person name="Satou M."/>
            <person name="Tamse R."/>
            <person name="Vaysberg M."/>
            <person name="Wallender E.K."/>
            <person name="Wong C."/>
            <person name="Yamamura Y."/>
            <person name="Yuan S."/>
            <person name="Shinozaki K."/>
            <person name="Davis R.W."/>
            <person name="Theologis A."/>
            <person name="Ecker J.R."/>
        </authorList>
    </citation>
    <scope>NUCLEOTIDE SEQUENCE [LARGE SCALE MRNA]</scope>
    <source>
        <strain>cv. Columbia</strain>
    </source>
</reference>
<reference key="5">
    <citation type="submission" date="2005-03" db="EMBL/GenBank/DDBJ databases">
        <title>Large-scale analysis of RIKEN Arabidopsis full-length (RAFL) cDNAs.</title>
        <authorList>
            <person name="Totoki Y."/>
            <person name="Seki M."/>
            <person name="Ishida J."/>
            <person name="Nakajima M."/>
            <person name="Enju A."/>
            <person name="Kamiya A."/>
            <person name="Narusaka M."/>
            <person name="Shin-i T."/>
            <person name="Nakagawa M."/>
            <person name="Sakamoto N."/>
            <person name="Oishi K."/>
            <person name="Kohara Y."/>
            <person name="Kobayashi M."/>
            <person name="Toyoda A."/>
            <person name="Sakaki Y."/>
            <person name="Sakurai T."/>
            <person name="Iida K."/>
            <person name="Akiyama K."/>
            <person name="Satou M."/>
            <person name="Toyoda T."/>
            <person name="Konagaya A."/>
            <person name="Carninci P."/>
            <person name="Kawai J."/>
            <person name="Hayashizaki Y."/>
            <person name="Shinozaki K."/>
        </authorList>
    </citation>
    <scope>NUCLEOTIDE SEQUENCE [LARGE SCALE MRNA] OF 240-539</scope>
    <source>
        <strain>cv. Columbia</strain>
    </source>
</reference>
<reference key="6">
    <citation type="journal article" date="2003" name="Plant Cell">
        <title>Functional analysis of beta- and epsilon-ring carotenoid hydroxylases in Arabidopsis.</title>
        <authorList>
            <person name="Tian L."/>
            <person name="Magallanes-Lundback M."/>
            <person name="Musetti V."/>
            <person name="DellaPenna D."/>
        </authorList>
    </citation>
    <scope>FUNCTION</scope>
    <scope>DISRUPTION PHENOTYPE</scope>
</reference>
<reference key="7">
    <citation type="journal article" date="2006" name="FEBS Lett.">
        <title>Elucidation of the beta-carotene hydroxylation pathway in Arabidopsis thaliana.</title>
        <authorList>
            <person name="Fiore A."/>
            <person name="Dall'osto L."/>
            <person name="Fraser P.D."/>
            <person name="Bassi R."/>
            <person name="Giuliano G."/>
        </authorList>
    </citation>
    <scope>FUNCTION</scope>
    <scope>DISRUPTION PHENOTYPE</scope>
</reference>
<reference key="8">
    <citation type="journal article" date="2008" name="Physiol. Plantarum">
        <title>The role of lutein in the acclimation of higher plant chloroplast membranes to suboptimal conditions.</title>
        <authorList>
            <person name="Perez-Bueno M.L."/>
            <person name="Horton P."/>
        </authorList>
    </citation>
    <scope>DISRUPTION PHENOTYPE</scope>
</reference>
<reference key="9">
    <citation type="journal article" date="2009" name="Plant Cell Physiol.">
        <title>The evolution and function of carotenoid hydroxylases in Arabidopsis.</title>
        <authorList>
            <person name="Kim J."/>
            <person name="Smith J.J."/>
            <person name="Tian L."/>
            <person name="Dellapenna D."/>
        </authorList>
    </citation>
    <scope>FUNCTION</scope>
</reference>
<reference key="10">
    <citation type="journal article" date="2009" name="Plant Physiol.">
        <title>Large-scale Arabidopsis phosphoproteome profiling reveals novel chloroplast kinase substrates and phosphorylation networks.</title>
        <authorList>
            <person name="Reiland S."/>
            <person name="Messerli G."/>
            <person name="Baerenfaller K."/>
            <person name="Gerrits B."/>
            <person name="Endler A."/>
            <person name="Grossmann J."/>
            <person name="Gruissem W."/>
            <person name="Baginsky S."/>
        </authorList>
    </citation>
    <scope>IDENTIFICATION BY MASS SPECTROMETRY [LARGE SCALE ANALYSIS]</scope>
</reference>
<reference key="11">
    <citation type="journal article" date="2010" name="Phytochemistry">
        <title>Over-expression of Arabidopsis thaliana carotenoid hydroxylases individually and in combination with a beta-carotene ketolase provides insight into in vivo functions.</title>
        <authorList>
            <person name="Kim J.E."/>
            <person name="Cheng K.M."/>
            <person name="Craft N.E."/>
            <person name="Hamberger B."/>
            <person name="Douglas C.J."/>
        </authorList>
    </citation>
    <scope>FUNCTION</scope>
</reference>
<reference key="12">
    <citation type="journal article" date="2012" name="BMC Plant Biol.">
        <title>A quadruple mutant of Arabidopsis reveals a beta-carotene hydroxylation activity for LUT1/CYP97C1 and a regulatory role of xanthophylls on determination of the PSI/PSII ratio.</title>
        <authorList>
            <person name="Fiore A."/>
            <person name="Dall'Osto L."/>
            <person name="Cazzaniga S."/>
            <person name="Diretto G."/>
            <person name="Giuliano G."/>
            <person name="Bassi R."/>
        </authorList>
    </citation>
    <scope>FUNCTION</scope>
</reference>
<reference key="13">
    <citation type="journal article" date="2020" name="Proc. Natl. Acad. Sci. U.S.A.">
        <title>Structural basis for plant lutein biosynthesis from alpha-carotene.</title>
        <authorList>
            <person name="Niu G."/>
            <person name="Guo Q."/>
            <person name="Wang J."/>
            <person name="Zhao S."/>
            <person name="He Y."/>
            <person name="Liu L."/>
        </authorList>
    </citation>
    <scope>X-RAY CRYSTALLOGRAPHY (2.00 ANGSTROMS) OF 70-539 IN COMPLEX WITH HEME</scope>
    <scope>COFACTOR</scope>
</reference>
<accession>Q6TBX7</accession>
<accession>Q56ZY1</accession>
<accession>Q8RWV4</accession>
<accession>Q9SCP8</accession>
<evidence type="ECO:0000255" key="1"/>
<evidence type="ECO:0000269" key="2">
    <source>
    </source>
</evidence>
<evidence type="ECO:0000269" key="3">
    <source>
    </source>
</evidence>
<evidence type="ECO:0000269" key="4">
    <source>
    </source>
</evidence>
<evidence type="ECO:0000269" key="5">
    <source>
    </source>
</evidence>
<evidence type="ECO:0000269" key="6">
    <source>
    </source>
</evidence>
<evidence type="ECO:0000269" key="7">
    <source>
    </source>
</evidence>
<evidence type="ECO:0000269" key="8">
    <source>
    </source>
</evidence>
<evidence type="ECO:0000269" key="9">
    <source>
    </source>
</evidence>
<evidence type="ECO:0000305" key="10"/>
<evidence type="ECO:0007829" key="11">
    <source>
        <dbReference type="PDB" id="6L8H"/>
    </source>
</evidence>
<feature type="transit peptide" description="Chloroplast" evidence="1">
    <location>
        <begin position="1"/>
        <end position="36"/>
    </location>
</feature>
<feature type="chain" id="PRO_0000412810" description="Carotene epsilon-monooxygenase, chloroplastic">
    <location>
        <begin position="37"/>
        <end position="539"/>
    </location>
</feature>
<feature type="binding site" description="axial binding residue" evidence="9">
    <location>
        <position position="487"/>
    </location>
    <ligand>
        <name>heme</name>
        <dbReference type="ChEBI" id="CHEBI:30413"/>
    </ligand>
    <ligandPart>
        <name>Fe</name>
        <dbReference type="ChEBI" id="CHEBI:18248"/>
    </ligandPart>
</feature>
<feature type="helix" evidence="11">
    <location>
        <begin position="86"/>
        <end position="93"/>
    </location>
</feature>
<feature type="helix" evidence="11">
    <location>
        <begin position="98"/>
        <end position="108"/>
    </location>
</feature>
<feature type="strand" evidence="11">
    <location>
        <begin position="110"/>
        <end position="116"/>
    </location>
</feature>
<feature type="strand" evidence="11">
    <location>
        <begin position="119"/>
        <end position="124"/>
    </location>
</feature>
<feature type="helix" evidence="11">
    <location>
        <begin position="127"/>
        <end position="135"/>
    </location>
</feature>
<feature type="turn" evidence="11">
    <location>
        <begin position="137"/>
        <end position="139"/>
    </location>
</feature>
<feature type="helix" evidence="11">
    <location>
        <begin position="144"/>
        <end position="148"/>
    </location>
</feature>
<feature type="helix" evidence="11">
    <location>
        <begin position="150"/>
        <end position="153"/>
    </location>
</feature>
<feature type="turn" evidence="11">
    <location>
        <begin position="157"/>
        <end position="159"/>
    </location>
</feature>
<feature type="helix" evidence="11">
    <location>
        <begin position="162"/>
        <end position="172"/>
    </location>
</feature>
<feature type="helix" evidence="11">
    <location>
        <begin position="173"/>
        <end position="176"/>
    </location>
</feature>
<feature type="helix" evidence="11">
    <location>
        <begin position="178"/>
        <end position="187"/>
    </location>
</feature>
<feature type="helix" evidence="11">
    <location>
        <begin position="189"/>
        <end position="206"/>
    </location>
</feature>
<feature type="helix" evidence="11">
    <location>
        <begin position="212"/>
        <end position="229"/>
    </location>
</feature>
<feature type="turn" evidence="11">
    <location>
        <begin position="235"/>
        <end position="237"/>
    </location>
</feature>
<feature type="helix" evidence="11">
    <location>
        <begin position="241"/>
        <end position="258"/>
    </location>
</feature>
<feature type="helix" evidence="11">
    <location>
        <begin position="263"/>
        <end position="265"/>
    </location>
</feature>
<feature type="helix" evidence="11">
    <location>
        <begin position="267"/>
        <end position="272"/>
    </location>
</feature>
<feature type="helix" evidence="11">
    <location>
        <begin position="274"/>
        <end position="304"/>
    </location>
</feature>
<feature type="helix" evidence="11">
    <location>
        <begin position="321"/>
        <end position="328"/>
    </location>
</feature>
<feature type="helix" evidence="11">
    <location>
        <begin position="334"/>
        <end position="364"/>
    </location>
</feature>
<feature type="helix" evidence="11">
    <location>
        <begin position="367"/>
        <end position="381"/>
    </location>
</feature>
<feature type="helix" evidence="11">
    <location>
        <begin position="388"/>
        <end position="393"/>
    </location>
</feature>
<feature type="helix" evidence="11">
    <location>
        <begin position="395"/>
        <end position="407"/>
    </location>
</feature>
<feature type="strand" evidence="11">
    <location>
        <begin position="410"/>
        <end position="420"/>
    </location>
</feature>
<feature type="strand" evidence="11">
    <location>
        <begin position="422"/>
        <end position="424"/>
    </location>
</feature>
<feature type="turn" evidence="11">
    <location>
        <begin position="425"/>
        <end position="427"/>
    </location>
</feature>
<feature type="strand" evidence="11">
    <location>
        <begin position="428"/>
        <end position="430"/>
    </location>
</feature>
<feature type="strand" evidence="11">
    <location>
        <begin position="435"/>
        <end position="439"/>
    </location>
</feature>
<feature type="helix" evidence="11">
    <location>
        <begin position="440"/>
        <end position="445"/>
    </location>
</feature>
<feature type="turn" evidence="11">
    <location>
        <begin position="447"/>
        <end position="449"/>
    </location>
</feature>
<feature type="turn" evidence="11">
    <location>
        <begin position="451"/>
        <end position="454"/>
    </location>
</feature>
<feature type="helix" evidence="11">
    <location>
        <begin position="458"/>
        <end position="460"/>
    </location>
</feature>
<feature type="turn" evidence="11">
    <location>
        <begin position="470"/>
        <end position="475"/>
    </location>
</feature>
<feature type="helix" evidence="11">
    <location>
        <begin position="483"/>
        <end position="485"/>
    </location>
</feature>
<feature type="helix" evidence="11">
    <location>
        <begin position="490"/>
        <end position="507"/>
    </location>
</feature>
<feature type="strand" evidence="11">
    <location>
        <begin position="508"/>
        <end position="512"/>
    </location>
</feature>
<feature type="strand" evidence="11">
    <location>
        <begin position="520"/>
        <end position="530"/>
    </location>
</feature>
<feature type="strand" evidence="11">
    <location>
        <begin position="533"/>
        <end position="538"/>
    </location>
</feature>